<comment type="function">
    <text evidence="1">The RuvA-RuvB-RuvC complex processes Holliday junction (HJ) DNA during genetic recombination and DNA repair. Endonuclease that resolves HJ intermediates. Cleaves cruciform DNA by making single-stranded nicks across the HJ at symmetrical positions within the homologous arms, yielding a 5'-phosphate and a 3'-hydroxyl group; requires a central core of homology in the junction. The consensus cleavage sequence is 5'-(A/T)TT(C/G)-3'. Cleavage occurs on the 3'-side of the TT dinucleotide at the point of strand exchange. HJ branch migration catalyzed by RuvA-RuvB allows RuvC to scan DNA until it finds its consensus sequence, where it cleaves and resolves the cruciform DNA.</text>
</comment>
<comment type="catalytic activity">
    <reaction evidence="1">
        <text>Endonucleolytic cleavage at a junction such as a reciprocal single-stranded crossover between two homologous DNA duplexes (Holliday junction).</text>
        <dbReference type="EC" id="3.1.21.10"/>
    </reaction>
</comment>
<comment type="cofactor">
    <cofactor evidence="1">
        <name>Mg(2+)</name>
        <dbReference type="ChEBI" id="CHEBI:18420"/>
    </cofactor>
    <text evidence="1">Binds 2 Mg(2+) ion per subunit.</text>
</comment>
<comment type="subunit">
    <text evidence="1">Homodimer which binds Holliday junction (HJ) DNA. The HJ becomes 2-fold symmetrical on binding to RuvC with unstacked arms; it has a different conformation from HJ DNA in complex with RuvA. In the full resolvosome a probable DNA-RuvA(4)-RuvB(12)-RuvC(2) complex forms which resolves the HJ.</text>
</comment>
<comment type="subcellular location">
    <subcellularLocation>
        <location evidence="1">Cytoplasm</location>
    </subcellularLocation>
</comment>
<comment type="similarity">
    <text evidence="1">Belongs to the RuvC family.</text>
</comment>
<gene>
    <name evidence="1" type="primary">ruvC</name>
    <name type="ordered locus">AB57_1753</name>
</gene>
<evidence type="ECO:0000255" key="1">
    <source>
        <dbReference type="HAMAP-Rule" id="MF_00034"/>
    </source>
</evidence>
<accession>B7I4I7</accession>
<feature type="chain" id="PRO_1000195228" description="Crossover junction endodeoxyribonuclease RuvC">
    <location>
        <begin position="1"/>
        <end position="181"/>
    </location>
</feature>
<feature type="active site" evidence="1">
    <location>
        <position position="8"/>
    </location>
</feature>
<feature type="active site" evidence="1">
    <location>
        <position position="67"/>
    </location>
</feature>
<feature type="active site" evidence="1">
    <location>
        <position position="139"/>
    </location>
</feature>
<feature type="binding site" evidence="1">
    <location>
        <position position="8"/>
    </location>
    <ligand>
        <name>Mg(2+)</name>
        <dbReference type="ChEBI" id="CHEBI:18420"/>
        <label>1</label>
    </ligand>
</feature>
<feature type="binding site" evidence="1">
    <location>
        <position position="67"/>
    </location>
    <ligand>
        <name>Mg(2+)</name>
        <dbReference type="ChEBI" id="CHEBI:18420"/>
        <label>2</label>
    </ligand>
</feature>
<feature type="binding site" evidence="1">
    <location>
        <position position="139"/>
    </location>
    <ligand>
        <name>Mg(2+)</name>
        <dbReference type="ChEBI" id="CHEBI:18420"/>
        <label>1</label>
    </ligand>
</feature>
<dbReference type="EC" id="3.1.21.10" evidence="1"/>
<dbReference type="EMBL" id="CP001182">
    <property type="protein sequence ID" value="ACJ41135.1"/>
    <property type="molecule type" value="Genomic_DNA"/>
</dbReference>
<dbReference type="RefSeq" id="WP_001128330.1">
    <property type="nucleotide sequence ID" value="NC_011586.2"/>
</dbReference>
<dbReference type="SMR" id="B7I4I7"/>
<dbReference type="GeneID" id="92893740"/>
<dbReference type="KEGG" id="abn:AB57_1753"/>
<dbReference type="HOGENOM" id="CLU_091257_2_1_6"/>
<dbReference type="Proteomes" id="UP000007094">
    <property type="component" value="Chromosome"/>
</dbReference>
<dbReference type="GO" id="GO:0005737">
    <property type="term" value="C:cytoplasm"/>
    <property type="evidence" value="ECO:0007669"/>
    <property type="project" value="UniProtKB-SubCell"/>
</dbReference>
<dbReference type="GO" id="GO:0048476">
    <property type="term" value="C:Holliday junction resolvase complex"/>
    <property type="evidence" value="ECO:0007669"/>
    <property type="project" value="UniProtKB-UniRule"/>
</dbReference>
<dbReference type="GO" id="GO:0008821">
    <property type="term" value="F:crossover junction DNA endonuclease activity"/>
    <property type="evidence" value="ECO:0007669"/>
    <property type="project" value="UniProtKB-UniRule"/>
</dbReference>
<dbReference type="GO" id="GO:0003677">
    <property type="term" value="F:DNA binding"/>
    <property type="evidence" value="ECO:0007669"/>
    <property type="project" value="UniProtKB-KW"/>
</dbReference>
<dbReference type="GO" id="GO:0000287">
    <property type="term" value="F:magnesium ion binding"/>
    <property type="evidence" value="ECO:0007669"/>
    <property type="project" value="UniProtKB-UniRule"/>
</dbReference>
<dbReference type="GO" id="GO:0006310">
    <property type="term" value="P:DNA recombination"/>
    <property type="evidence" value="ECO:0007669"/>
    <property type="project" value="UniProtKB-UniRule"/>
</dbReference>
<dbReference type="GO" id="GO:0006281">
    <property type="term" value="P:DNA repair"/>
    <property type="evidence" value="ECO:0007669"/>
    <property type="project" value="UniProtKB-UniRule"/>
</dbReference>
<dbReference type="CDD" id="cd16962">
    <property type="entry name" value="RuvC"/>
    <property type="match status" value="1"/>
</dbReference>
<dbReference type="FunFam" id="3.30.420.10:FF:000002">
    <property type="entry name" value="Crossover junction endodeoxyribonuclease RuvC"/>
    <property type="match status" value="1"/>
</dbReference>
<dbReference type="Gene3D" id="3.30.420.10">
    <property type="entry name" value="Ribonuclease H-like superfamily/Ribonuclease H"/>
    <property type="match status" value="1"/>
</dbReference>
<dbReference type="HAMAP" id="MF_00034">
    <property type="entry name" value="RuvC"/>
    <property type="match status" value="1"/>
</dbReference>
<dbReference type="InterPro" id="IPR012337">
    <property type="entry name" value="RNaseH-like_sf"/>
</dbReference>
<dbReference type="InterPro" id="IPR036397">
    <property type="entry name" value="RNaseH_sf"/>
</dbReference>
<dbReference type="InterPro" id="IPR020563">
    <property type="entry name" value="X-over_junc_endoDNase_Mg_BS"/>
</dbReference>
<dbReference type="InterPro" id="IPR002176">
    <property type="entry name" value="X-over_junc_endoDNase_RuvC"/>
</dbReference>
<dbReference type="NCBIfam" id="TIGR00228">
    <property type="entry name" value="ruvC"/>
    <property type="match status" value="1"/>
</dbReference>
<dbReference type="PANTHER" id="PTHR30194">
    <property type="entry name" value="CROSSOVER JUNCTION ENDODEOXYRIBONUCLEASE RUVC"/>
    <property type="match status" value="1"/>
</dbReference>
<dbReference type="PANTHER" id="PTHR30194:SF3">
    <property type="entry name" value="CROSSOVER JUNCTION ENDODEOXYRIBONUCLEASE RUVC"/>
    <property type="match status" value="1"/>
</dbReference>
<dbReference type="Pfam" id="PF02075">
    <property type="entry name" value="RuvC"/>
    <property type="match status" value="1"/>
</dbReference>
<dbReference type="PRINTS" id="PR00696">
    <property type="entry name" value="RSOLVASERUVC"/>
</dbReference>
<dbReference type="SUPFAM" id="SSF53098">
    <property type="entry name" value="Ribonuclease H-like"/>
    <property type="match status" value="1"/>
</dbReference>
<dbReference type="PROSITE" id="PS01321">
    <property type="entry name" value="RUVC"/>
    <property type="match status" value="1"/>
</dbReference>
<name>RUVC_ACIB5</name>
<reference key="1">
    <citation type="journal article" date="2008" name="J. Bacteriol.">
        <title>Comparative genome sequence analysis of multidrug-resistant Acinetobacter baumannii.</title>
        <authorList>
            <person name="Adams M.D."/>
            <person name="Goglin K."/>
            <person name="Molyneaux N."/>
            <person name="Hujer K.M."/>
            <person name="Lavender H."/>
            <person name="Jamison J.J."/>
            <person name="MacDonald I.J."/>
            <person name="Martin K.M."/>
            <person name="Russo T."/>
            <person name="Campagnari A.A."/>
            <person name="Hujer A.M."/>
            <person name="Bonomo R.A."/>
            <person name="Gill S.R."/>
        </authorList>
    </citation>
    <scope>NUCLEOTIDE SEQUENCE [LARGE SCALE GENOMIC DNA]</scope>
    <source>
        <strain>AB0057</strain>
    </source>
</reference>
<sequence length="181" mass="19446">MPLIIGIDPGSRLTGYGIIEKDGSKLRFVDAGTIRTETQEMPERLKRIFAGVERIVKFHGPTEAAVEQVFMAQNPDSALKLGQARGAAIAALVNLDLQVAEYTARQIKQSVVGYGAADKEQVQMMVMRLLNLTIKPQADAADALAAAICHAHASGSMSKLTVLNALGGMARGRSRSSSRRR</sequence>
<organism>
    <name type="scientific">Acinetobacter baumannii (strain AB0057)</name>
    <dbReference type="NCBI Taxonomy" id="480119"/>
    <lineage>
        <taxon>Bacteria</taxon>
        <taxon>Pseudomonadati</taxon>
        <taxon>Pseudomonadota</taxon>
        <taxon>Gammaproteobacteria</taxon>
        <taxon>Moraxellales</taxon>
        <taxon>Moraxellaceae</taxon>
        <taxon>Acinetobacter</taxon>
        <taxon>Acinetobacter calcoaceticus/baumannii complex</taxon>
    </lineage>
</organism>
<keyword id="KW-0963">Cytoplasm</keyword>
<keyword id="KW-0227">DNA damage</keyword>
<keyword id="KW-0233">DNA recombination</keyword>
<keyword id="KW-0234">DNA repair</keyword>
<keyword id="KW-0238">DNA-binding</keyword>
<keyword id="KW-0255">Endonuclease</keyword>
<keyword id="KW-0378">Hydrolase</keyword>
<keyword id="KW-0460">Magnesium</keyword>
<keyword id="KW-0479">Metal-binding</keyword>
<keyword id="KW-0540">Nuclease</keyword>
<protein>
    <recommendedName>
        <fullName evidence="1">Crossover junction endodeoxyribonuclease RuvC</fullName>
        <ecNumber evidence="1">3.1.21.10</ecNumber>
    </recommendedName>
    <alternativeName>
        <fullName evidence="1">Holliday junction nuclease RuvC</fullName>
    </alternativeName>
    <alternativeName>
        <fullName evidence="1">Holliday junction resolvase RuvC</fullName>
    </alternativeName>
</protein>
<proteinExistence type="inferred from homology"/>